<evidence type="ECO:0000250" key="1">
    <source>
        <dbReference type="UniProtKB" id="P97473"/>
    </source>
</evidence>
<evidence type="ECO:0000250" key="2">
    <source>
        <dbReference type="UniProtKB" id="Q15633"/>
    </source>
</evidence>
<evidence type="ECO:0000255" key="3">
    <source>
        <dbReference type="HAMAP-Rule" id="MF_03034"/>
    </source>
</evidence>
<comment type="function">
    <text evidence="1 2 3">Required for formation of the RNA induced silencing complex (RISC). Component of the RISC loading complex (RLC), also known as the micro-RNA (miRNA) loading complex (miRLC), which is composed of DICER1, AGO2 and TARBP2. Within the RLC/miRLC, DICER1 and TARBP2 are required to process precursor miRNAs (pre-miRNAs) to mature miRNAs and then load them onto AGO2. AGO2 bound to the mature miRNA constitutes the minimal RISC and may subsequently dissociate from DICER1 and TARBP2. May also play a role in the production of short interfering RNAs (siRNAs) from double-stranded RNA (dsRNA) by DICER1 (By similarity). Binds in vitro to the PRM1 3'-UTR (By similarity). Seems to act as a repressor of translation (By similarity). For some pre-miRNA substrates, may also alter the choice of cleavage site by DICER1 (By similarity). Negatively regulates IRF7-mediated IFN-beta signaling triggered by viral infection by inhibiting the phosphorylation of IRF7 and promoting its 'Lys'-48-linked ubiquitination and degradation (By similarity).</text>
</comment>
<comment type="subunit">
    <text evidence="3">Self-associates. Component of the RISC loading complex (RLC), or micro-RNA (miRNA) loading complex (miRLC), which is composed of DICER1, AGO2 and TARBP2. Note that the trimeric RLC/miRLC is also referred to as RISC. Interacts with EIF2AK2/PKR and inhibits its protein kinase activity. Interacts with DHX9 and PRKRA. Interacts with DICER1, AGO2, MOV10, EIF6 and RPL7A (60S ribosome subunit); they form a large RNA-induced silencing complex (RISC) (By similarity). Interacts with IRF7; this interaction prevents IRF7 phosphorylation and activation (By similarity).</text>
</comment>
<comment type="subcellular location">
    <subcellularLocation>
        <location evidence="3">Cytoplasm</location>
    </subcellularLocation>
    <subcellularLocation>
        <location evidence="3">Cytoplasm</location>
        <location evidence="3">Perinuclear region</location>
    </subcellularLocation>
    <subcellularLocation>
        <location evidence="3">Nucleus</location>
    </subcellularLocation>
</comment>
<comment type="similarity">
    <text evidence="3">Belongs to the TARBP2 family.</text>
</comment>
<dbReference type="EMBL" id="CH474035">
    <property type="protein sequence ID" value="EDL86826.1"/>
    <property type="molecule type" value="mRNA"/>
</dbReference>
<dbReference type="EMBL" id="BC104690">
    <property type="protein sequence ID" value="AAI04691.1"/>
    <property type="molecule type" value="mRNA"/>
</dbReference>
<dbReference type="RefSeq" id="NP_001030113.1">
    <property type="nucleotide sequence ID" value="NM_001034941.1"/>
</dbReference>
<dbReference type="SMR" id="Q3SWU0"/>
<dbReference type="FunCoup" id="Q3SWU0">
    <property type="interactions" value="2157"/>
</dbReference>
<dbReference type="STRING" id="10116.ENSRNOP00000061329"/>
<dbReference type="GlyGen" id="Q3SWU0">
    <property type="glycosylation" value="1 site"/>
</dbReference>
<dbReference type="PhosphoSitePlus" id="Q3SWU0"/>
<dbReference type="PaxDb" id="10116-ENSRNOP00000061329"/>
<dbReference type="Ensembl" id="ENSRNOT00000064661.3">
    <property type="protein sequence ID" value="ENSRNOP00000061329.2"/>
    <property type="gene ID" value="ENSRNOG00000042355.3"/>
</dbReference>
<dbReference type="GeneID" id="363006"/>
<dbReference type="KEGG" id="rno:363006"/>
<dbReference type="UCSC" id="RGD:1307375">
    <property type="organism name" value="rat"/>
</dbReference>
<dbReference type="AGR" id="RGD:1307375"/>
<dbReference type="CTD" id="6895"/>
<dbReference type="RGD" id="1307375">
    <property type="gene designation" value="Tarbp2"/>
</dbReference>
<dbReference type="eggNOG" id="KOG3732">
    <property type="taxonomic scope" value="Eukaryota"/>
</dbReference>
<dbReference type="GeneTree" id="ENSGT00940000157748"/>
<dbReference type="HOGENOM" id="CLU_048292_2_0_1"/>
<dbReference type="InParanoid" id="Q3SWU0"/>
<dbReference type="OMA" id="GYSCTWD"/>
<dbReference type="PhylomeDB" id="Q3SWU0"/>
<dbReference type="Reactome" id="R-RNO-203927">
    <property type="pathway name" value="MicroRNA (miRNA) biogenesis"/>
</dbReference>
<dbReference type="Reactome" id="R-RNO-426486">
    <property type="pathway name" value="Small interfering RNA (siRNA) biogenesis"/>
</dbReference>
<dbReference type="Reactome" id="R-RNO-9833482">
    <property type="pathway name" value="PKR-mediated signaling"/>
</dbReference>
<dbReference type="PRO" id="PR:Q3SWU0"/>
<dbReference type="Proteomes" id="UP000002494">
    <property type="component" value="Chromosome 7"/>
</dbReference>
<dbReference type="Proteomes" id="UP000234681">
    <property type="component" value="Chromosome 7"/>
</dbReference>
<dbReference type="Bgee" id="ENSRNOG00000042355">
    <property type="expression patterns" value="Expressed in pancreas and 20 other cell types or tissues"/>
</dbReference>
<dbReference type="GO" id="GO:0005737">
    <property type="term" value="C:cytoplasm"/>
    <property type="evidence" value="ECO:0000250"/>
    <property type="project" value="UniProtKB"/>
</dbReference>
<dbReference type="GO" id="GO:0005634">
    <property type="term" value="C:nucleus"/>
    <property type="evidence" value="ECO:0000318"/>
    <property type="project" value="GO_Central"/>
</dbReference>
<dbReference type="GO" id="GO:0048471">
    <property type="term" value="C:perinuclear region of cytoplasm"/>
    <property type="evidence" value="ECO:0007669"/>
    <property type="project" value="UniProtKB-SubCell"/>
</dbReference>
<dbReference type="GO" id="GO:0016442">
    <property type="term" value="C:RISC complex"/>
    <property type="evidence" value="ECO:0000250"/>
    <property type="project" value="UniProtKB"/>
</dbReference>
<dbReference type="GO" id="GO:0070578">
    <property type="term" value="C:RISC-loading complex"/>
    <property type="evidence" value="ECO:0000250"/>
    <property type="project" value="UniProtKB"/>
</dbReference>
<dbReference type="GO" id="GO:0003725">
    <property type="term" value="F:double-stranded RNA binding"/>
    <property type="evidence" value="ECO:0000266"/>
    <property type="project" value="RGD"/>
</dbReference>
<dbReference type="GO" id="GO:0019899">
    <property type="term" value="F:enzyme binding"/>
    <property type="evidence" value="ECO:0000266"/>
    <property type="project" value="RGD"/>
</dbReference>
<dbReference type="GO" id="GO:0042802">
    <property type="term" value="F:identical protein binding"/>
    <property type="evidence" value="ECO:0000266"/>
    <property type="project" value="RGD"/>
</dbReference>
<dbReference type="GO" id="GO:0035198">
    <property type="term" value="F:miRNA binding"/>
    <property type="evidence" value="ECO:0007669"/>
    <property type="project" value="UniProtKB-UniRule"/>
</dbReference>
<dbReference type="GO" id="GO:0070883">
    <property type="term" value="F:pre-miRNA binding"/>
    <property type="evidence" value="ECO:0000266"/>
    <property type="project" value="RGD"/>
</dbReference>
<dbReference type="GO" id="GO:0042803">
    <property type="term" value="F:protein homodimerization activity"/>
    <property type="evidence" value="ECO:0000266"/>
    <property type="project" value="RGD"/>
</dbReference>
<dbReference type="GO" id="GO:0140311">
    <property type="term" value="F:protein sequestering activity"/>
    <property type="evidence" value="ECO:0000266"/>
    <property type="project" value="RGD"/>
</dbReference>
<dbReference type="GO" id="GO:0035197">
    <property type="term" value="F:siRNA binding"/>
    <property type="evidence" value="ECO:0000250"/>
    <property type="project" value="UniProtKB"/>
</dbReference>
<dbReference type="GO" id="GO:0098795">
    <property type="term" value="P:global gene silencing by mRNA cleavage"/>
    <property type="evidence" value="ECO:0000250"/>
    <property type="project" value="UniProtKB"/>
</dbReference>
<dbReference type="GO" id="GO:0035196">
    <property type="term" value="P:miRNA processing"/>
    <property type="evidence" value="ECO:0000266"/>
    <property type="project" value="RGD"/>
</dbReference>
<dbReference type="GO" id="GO:0035264">
    <property type="term" value="P:multicellular organism growth"/>
    <property type="evidence" value="ECO:0000266"/>
    <property type="project" value="RGD"/>
</dbReference>
<dbReference type="GO" id="GO:0039532">
    <property type="term" value="P:negative regulation of cytoplasmic pattern recognition receptor signaling pathway"/>
    <property type="evidence" value="ECO:0000266"/>
    <property type="project" value="RGD"/>
</dbReference>
<dbReference type="GO" id="GO:0050689">
    <property type="term" value="P:negative regulation of defense response to virus by host"/>
    <property type="evidence" value="ECO:0000250"/>
    <property type="project" value="UniProtKB"/>
</dbReference>
<dbReference type="GO" id="GO:0061351">
    <property type="term" value="P:neural precursor cell proliferation"/>
    <property type="evidence" value="ECO:0000266"/>
    <property type="project" value="RGD"/>
</dbReference>
<dbReference type="GO" id="GO:0051149">
    <property type="term" value="P:positive regulation of muscle cell differentiation"/>
    <property type="evidence" value="ECO:0000266"/>
    <property type="project" value="RGD"/>
</dbReference>
<dbReference type="GO" id="GO:0045727">
    <property type="term" value="P:positive regulation of translation"/>
    <property type="evidence" value="ECO:0000266"/>
    <property type="project" value="RGD"/>
</dbReference>
<dbReference type="GO" id="GO:0045070">
    <property type="term" value="P:positive regulation of viral genome replication"/>
    <property type="evidence" value="ECO:0000250"/>
    <property type="project" value="UniProtKB"/>
</dbReference>
<dbReference type="GO" id="GO:0031054">
    <property type="term" value="P:pre-miRNA processing"/>
    <property type="evidence" value="ECO:0000250"/>
    <property type="project" value="UniProtKB"/>
</dbReference>
<dbReference type="GO" id="GO:1903798">
    <property type="term" value="P:regulation of miRNA processing"/>
    <property type="evidence" value="ECO:0000266"/>
    <property type="project" value="RGD"/>
</dbReference>
<dbReference type="GO" id="GO:0070920">
    <property type="term" value="P:regulation of regulatory ncRNA processing"/>
    <property type="evidence" value="ECO:0000318"/>
    <property type="project" value="GO_Central"/>
</dbReference>
<dbReference type="GO" id="GO:0070921">
    <property type="term" value="P:regulation of siRNA processing"/>
    <property type="evidence" value="ECO:0007669"/>
    <property type="project" value="InterPro"/>
</dbReference>
<dbReference type="GO" id="GO:0046782">
    <property type="term" value="P:regulation of viral transcription"/>
    <property type="evidence" value="ECO:0000250"/>
    <property type="project" value="UniProtKB"/>
</dbReference>
<dbReference type="GO" id="GO:0070922">
    <property type="term" value="P:RISC complex assembly"/>
    <property type="evidence" value="ECO:0000266"/>
    <property type="project" value="RGD"/>
</dbReference>
<dbReference type="GO" id="GO:0007338">
    <property type="term" value="P:single fertilization"/>
    <property type="evidence" value="ECO:0000266"/>
    <property type="project" value="RGD"/>
</dbReference>
<dbReference type="GO" id="GO:0030422">
    <property type="term" value="P:siRNA processing"/>
    <property type="evidence" value="ECO:0000250"/>
    <property type="project" value="UniProtKB"/>
</dbReference>
<dbReference type="GO" id="GO:0043403">
    <property type="term" value="P:skeletal muscle tissue regeneration"/>
    <property type="evidence" value="ECO:0000266"/>
    <property type="project" value="RGD"/>
</dbReference>
<dbReference type="GO" id="GO:0007286">
    <property type="term" value="P:spermatid development"/>
    <property type="evidence" value="ECO:0000266"/>
    <property type="project" value="RGD"/>
</dbReference>
<dbReference type="CDD" id="cd19890">
    <property type="entry name" value="DSRM_TARBP2_rpt1"/>
    <property type="match status" value="1"/>
</dbReference>
<dbReference type="CDD" id="cd10844">
    <property type="entry name" value="DSRM_TARBP2_rpt2"/>
    <property type="match status" value="1"/>
</dbReference>
<dbReference type="CDD" id="cd19893">
    <property type="entry name" value="DSRM_TARBP2_rpt3"/>
    <property type="match status" value="1"/>
</dbReference>
<dbReference type="FunFam" id="3.30.160.20:FF:000019">
    <property type="entry name" value="RISC-loading complex subunit TARBP2"/>
    <property type="match status" value="1"/>
</dbReference>
<dbReference type="FunFam" id="3.30.160.20:FF:000120">
    <property type="entry name" value="RISC-loading complex subunit TARBP2"/>
    <property type="match status" value="1"/>
</dbReference>
<dbReference type="FunFam" id="3.30.160.20:FF:000018">
    <property type="entry name" value="RISC-loading complex subunit TARBP2 isoform X3"/>
    <property type="match status" value="1"/>
</dbReference>
<dbReference type="Gene3D" id="3.30.160.20">
    <property type="match status" value="3"/>
</dbReference>
<dbReference type="HAMAP" id="MF_03034">
    <property type="entry name" value="TRBP2"/>
    <property type="match status" value="1"/>
</dbReference>
<dbReference type="InterPro" id="IPR014720">
    <property type="entry name" value="dsRBD_dom"/>
</dbReference>
<dbReference type="InterPro" id="IPR051247">
    <property type="entry name" value="RLC_Component"/>
</dbReference>
<dbReference type="InterPro" id="IPR028605">
    <property type="entry name" value="TRBP2"/>
</dbReference>
<dbReference type="InterPro" id="IPR044469">
    <property type="entry name" value="TRBP2_DSRM_1"/>
</dbReference>
<dbReference type="InterPro" id="IPR044470">
    <property type="entry name" value="TRBP2_DSRM_2"/>
</dbReference>
<dbReference type="InterPro" id="IPR044471">
    <property type="entry name" value="TRBP2_DSRM_3"/>
</dbReference>
<dbReference type="PANTHER" id="PTHR46205">
    <property type="entry name" value="LOQUACIOUS, ISOFORM B"/>
    <property type="match status" value="1"/>
</dbReference>
<dbReference type="PANTHER" id="PTHR46205:SF1">
    <property type="entry name" value="RISC-LOADING COMPLEX SUBUNIT TARBP2"/>
    <property type="match status" value="1"/>
</dbReference>
<dbReference type="Pfam" id="PF00035">
    <property type="entry name" value="dsrm"/>
    <property type="match status" value="2"/>
</dbReference>
<dbReference type="SMART" id="SM00358">
    <property type="entry name" value="DSRM"/>
    <property type="match status" value="3"/>
</dbReference>
<dbReference type="SUPFAM" id="SSF54768">
    <property type="entry name" value="dsRNA-binding domain-like"/>
    <property type="match status" value="3"/>
</dbReference>
<dbReference type="PROSITE" id="PS50137">
    <property type="entry name" value="DS_RBD"/>
    <property type="match status" value="3"/>
</dbReference>
<sequence length="365" mass="38850">MSEEDQGSGSTTGCGLPSIEQMLAANPGKTPISLLQEYGTRIGKTPVYDLLKAEGQAHQPNFTFRVTVGDTSCTGQGPSKKAAKHKAAEVALKHLKGGSMLEPALEDSSSFSLLDSSVPEDTAVIAAEAAAPVPSALLTRSPPMEMQPPVSPQQSECNPVGALQELVVQKGWRLPEYMVTQESGPAHRKEFTMTCRVERFIEIGSGTSKKLAKRNAAAKMLLRVHTVPLDARDGNEAEPDDDHFSIGVSSRLDGLRNRGPGCTWDSLRNSVGEKILSLRNCSVGSLGSLGSACCSILSELSAEQAFHVSYLDIEELSLSGLCQCLVELSTQPATVCYGSATTREAARGDAARRALQYLRIMAGSK</sequence>
<protein>
    <recommendedName>
        <fullName evidence="3">RISC-loading complex subunit TARBP2</fullName>
    </recommendedName>
</protein>
<accession>Q3SWU0</accession>
<feature type="chain" id="PRO_0000373971" description="RISC-loading complex subunit TARBP2">
    <location>
        <begin position="1"/>
        <end position="365"/>
    </location>
</feature>
<feature type="domain" description="DRBM 1" evidence="3">
    <location>
        <begin position="30"/>
        <end position="97"/>
    </location>
</feature>
<feature type="domain" description="DRBM 2" evidence="3">
    <location>
        <begin position="158"/>
        <end position="226"/>
    </location>
</feature>
<feature type="domain" description="DRBM 3" evidence="3">
    <location>
        <begin position="292"/>
        <end position="360"/>
    </location>
</feature>
<feature type="region of interest" description="Sufficient for interaction with PRKRA" evidence="3">
    <location>
        <begin position="22"/>
        <end position="105"/>
    </location>
</feature>
<feature type="region of interest" description="Sufficient for interaction with PRKRA" evidence="3">
    <location>
        <begin position="151"/>
        <end position="233"/>
    </location>
</feature>
<feature type="region of interest" description="Sufficient for interaction with DICER1" evidence="3">
    <location>
        <begin position="227"/>
        <end position="365"/>
    </location>
</feature>
<feature type="region of interest" description="Sufficient for interaction with PRKRA" evidence="3">
    <location>
        <begin position="286"/>
        <end position="365"/>
    </location>
</feature>
<feature type="modified residue" description="Phosphoserine" evidence="2">
    <location>
        <position position="151"/>
    </location>
</feature>
<reference key="1">
    <citation type="submission" date="2005-07" db="EMBL/GenBank/DDBJ databases">
        <authorList>
            <person name="Mural R.J."/>
            <person name="Adams M.D."/>
            <person name="Myers E.W."/>
            <person name="Smith H.O."/>
            <person name="Venter J.C."/>
        </authorList>
    </citation>
    <scope>NUCLEOTIDE SEQUENCE [LARGE SCALE GENOMIC DNA]</scope>
</reference>
<reference key="2">
    <citation type="journal article" date="2004" name="Genome Res.">
        <title>The status, quality, and expansion of the NIH full-length cDNA project: the Mammalian Gene Collection (MGC).</title>
        <authorList>
            <consortium name="The MGC Project Team"/>
        </authorList>
    </citation>
    <scope>NUCLEOTIDE SEQUENCE [LARGE SCALE MRNA]</scope>
    <source>
        <tissue>Kidney</tissue>
    </source>
</reference>
<proteinExistence type="evidence at transcript level"/>
<organism>
    <name type="scientific">Rattus norvegicus</name>
    <name type="common">Rat</name>
    <dbReference type="NCBI Taxonomy" id="10116"/>
    <lineage>
        <taxon>Eukaryota</taxon>
        <taxon>Metazoa</taxon>
        <taxon>Chordata</taxon>
        <taxon>Craniata</taxon>
        <taxon>Vertebrata</taxon>
        <taxon>Euteleostomi</taxon>
        <taxon>Mammalia</taxon>
        <taxon>Eutheria</taxon>
        <taxon>Euarchontoglires</taxon>
        <taxon>Glires</taxon>
        <taxon>Rodentia</taxon>
        <taxon>Myomorpha</taxon>
        <taxon>Muroidea</taxon>
        <taxon>Muridae</taxon>
        <taxon>Murinae</taxon>
        <taxon>Rattus</taxon>
    </lineage>
</organism>
<name>TRBP2_RAT</name>
<gene>
    <name type="primary">Tarbp2</name>
</gene>
<keyword id="KW-0963">Cytoplasm</keyword>
<keyword id="KW-0539">Nucleus</keyword>
<keyword id="KW-0597">Phosphoprotein</keyword>
<keyword id="KW-1185">Reference proteome</keyword>
<keyword id="KW-0677">Repeat</keyword>
<keyword id="KW-0694">RNA-binding</keyword>
<keyword id="KW-0943">RNA-mediated gene silencing</keyword>
<keyword id="KW-0810">Translation regulation</keyword>